<accession>P98999</accession>
<protein>
    <recommendedName>
        <fullName>Adenylate cyclase type 9</fullName>
        <ecNumber evidence="7">4.6.1.1</ecNumber>
    </recommendedName>
    <alternativeName>
        <fullName>ATP pyrophosphate-lyase 9</fullName>
    </alternativeName>
    <alternativeName>
        <fullName>Adenylate cyclase type IX</fullName>
    </alternativeName>
    <alternativeName>
        <fullName>Adenylyl cyclase 9</fullName>
        <shortName evidence="8">xlAC</shortName>
    </alternativeName>
</protein>
<keyword id="KW-0067">ATP-binding</keyword>
<keyword id="KW-0115">cAMP biosynthesis</keyword>
<keyword id="KW-1003">Cell membrane</keyword>
<keyword id="KW-0325">Glycoprotein</keyword>
<keyword id="KW-0456">Lyase</keyword>
<keyword id="KW-0460">Magnesium</keyword>
<keyword id="KW-0464">Manganese</keyword>
<keyword id="KW-0472">Membrane</keyword>
<keyword id="KW-0479">Metal-binding</keyword>
<keyword id="KW-0547">Nucleotide-binding</keyword>
<keyword id="KW-1185">Reference proteome</keyword>
<keyword id="KW-0677">Repeat</keyword>
<keyword id="KW-0812">Transmembrane</keyword>
<keyword id="KW-1133">Transmembrane helix</keyword>
<reference key="1">
    <citation type="journal article" date="1997" name="FEBS Lett.">
        <title>Molecular cloning and expression of an adenylyl cyclase from Xenopus laevis oocytes.</title>
        <authorList>
            <person name="Torrejon M."/>
            <person name="Echeverria V."/>
            <person name="Retamales G."/>
            <person name="Herrera L."/>
            <person name="Hinrichs M.V."/>
            <person name="Olate J."/>
        </authorList>
    </citation>
    <scope>NUCLEOTIDE SEQUENCE [MRNA]</scope>
    <scope>FUNCTION</scope>
    <scope>CATALYTIC ACTIVITY</scope>
    <scope>TISSUE SPECIFICITY</scope>
    <source>
        <tissue>Ovary</tissue>
    </source>
</reference>
<organism>
    <name type="scientific">Xenopus laevis</name>
    <name type="common">African clawed frog</name>
    <dbReference type="NCBI Taxonomy" id="8355"/>
    <lineage>
        <taxon>Eukaryota</taxon>
        <taxon>Metazoa</taxon>
        <taxon>Chordata</taxon>
        <taxon>Craniata</taxon>
        <taxon>Vertebrata</taxon>
        <taxon>Euteleostomi</taxon>
        <taxon>Amphibia</taxon>
        <taxon>Batrachia</taxon>
        <taxon>Anura</taxon>
        <taxon>Pipoidea</taxon>
        <taxon>Pipidae</taxon>
        <taxon>Xenopodinae</taxon>
        <taxon>Xenopus</taxon>
        <taxon>Xenopus</taxon>
    </lineage>
</organism>
<sequence>MASPVNQQLLHHTEVRCDGSGDGSSVTVRINRQHHQAPSRRCKYSISSSCSSGESGVKKTGGSGGARRQKKLPQLFERSTSNWWNPKFDSNNLEEACVERCFPQTQRRFRYALMYLSVAGLLWSIYFSVHMKTKLVSHLVPTLCFLIVCLGFFFFTFTKSYARHCTAISLLVTLLVFTLTLASQFQVLNPGLGSDSLSNLTSFSATGSSSCLSQVGSFSICVEVLLLLYTVMHLPLYLSACLGVAYSILFETFGYHFRDESCFVLLVGRMAHWELLSKALLHVCIHAIGVHLFIMSEVRSRSTFLKVGQSIMHGKDLEVEKALKERMIHSVMPRIIADDLMKQGDDESENSVKRHSASSPKSRKKKSSIQKTPIIFRPFKMQRIEQVSILFADIVGFTKMSANKSAHALVGLLNDLFGRFDRLCEETKCEKISTLGDCYYCVAGCPEPRPDHAYCCIEMGLGMIEAIDQFCQEKKEMVNMRVGVHTGTVLCGILGMRRFKFDVWSNDVNLANLMEQLGVAGKVHISEKTARYLDDRYLMEDSMVVERLGQIVAADQLKGLKTFLISGGRTRVPSCSCSQTLIPVQEGTDLSSPSLAPHVQAAISETSDSHTNCTQPETLKSCPSCGETAARDGPEEGVSAANGGGEEWKGGAPRPSAIGASLKDPERSPESSTGDTLTNSQASLYDMLQEKGRWCGVSMDQSALLPLRFKNIREKTDAHFVEVIKEDSLMKDYFFKPPINPLSLNFLDKELETSYRASYQEEVIRMAPVKTFASATFSSLQDVLLNYFIFVLLSVACLLKPGTNTVSPPTLALVLLSVCGLLGFLSLLVSVRMAFYLEDMLLCTRRLLEIISGWVPRHFIGTVLVCLPAAVIFSYLSSDFYTDIHYTMFLCSALLIPMVQYCNFCQLSSSALLLATITGATMLILIYLPLCPQRPPLDPGTDIEANLSTSNSSYETLDNPRTELPFTRLGQEIAVAYFLLLLLVWFLNREFDVSYRLHYHGDVEADLHRTKIQSMRDQADWLLRNIIPYHVAEQLKVSQSYSKNHDDAGVIFASIVNFSEFYEENYEGGKECYRALNELIGDFDELLSKPHYSCIEKIKTIGATYMAASGLNPSQCQDSSQPHRHLQTLFEFAKEMMSVVDEFNNNMLWFNFKLRIGFNHGPLTAGVIGTTKLLYDIWGDTVNIASRMDTTGVECRIQASEESYRVLVKMGYDFDYRGTVNVKGKGQMKTYHFPKCTDNGGLVPHHQLCISPDIRVQVDGSIGRSPTDEISSLVTGGKGAVELGSGEAERKREKAEERGRDGGAR</sequence>
<evidence type="ECO:0000250" key="1">
    <source>
        <dbReference type="UniProtKB" id="O60503"/>
    </source>
</evidence>
<evidence type="ECO:0000250" key="2">
    <source>
        <dbReference type="UniProtKB" id="P26769"/>
    </source>
</evidence>
<evidence type="ECO:0000250" key="3">
    <source>
        <dbReference type="UniProtKB" id="P30803"/>
    </source>
</evidence>
<evidence type="ECO:0000255" key="4"/>
<evidence type="ECO:0000255" key="5">
    <source>
        <dbReference type="PROSITE-ProRule" id="PRU00099"/>
    </source>
</evidence>
<evidence type="ECO:0000256" key="6">
    <source>
        <dbReference type="SAM" id="MobiDB-lite"/>
    </source>
</evidence>
<evidence type="ECO:0000269" key="7">
    <source>
    </source>
</evidence>
<evidence type="ECO:0000303" key="8">
    <source>
    </source>
</evidence>
<feature type="chain" id="PRO_0000195711" description="Adenylate cyclase type 9">
    <location>
        <begin position="1"/>
        <end position="1305"/>
    </location>
</feature>
<feature type="topological domain" description="Cytoplasmic" evidence="4">
    <location>
        <begin position="1"/>
        <end position="110"/>
    </location>
</feature>
<feature type="transmembrane region" description="Helical" evidence="4">
    <location>
        <begin position="111"/>
        <end position="131"/>
    </location>
</feature>
<feature type="topological domain" description="Extracellular" evidence="4">
    <location>
        <begin position="132"/>
        <end position="134"/>
    </location>
</feature>
<feature type="transmembrane region" description="Helical" evidence="4">
    <location>
        <begin position="135"/>
        <end position="155"/>
    </location>
</feature>
<feature type="topological domain" description="Cytoplasmic" evidence="4">
    <location>
        <begin position="156"/>
        <end position="164"/>
    </location>
</feature>
<feature type="transmembrane region" description="Helical" evidence="4">
    <location>
        <begin position="165"/>
        <end position="185"/>
    </location>
</feature>
<feature type="topological domain" description="Extracellular" evidence="4">
    <location>
        <begin position="186"/>
        <end position="209"/>
    </location>
</feature>
<feature type="transmembrane region" description="Helical" evidence="4">
    <location>
        <begin position="210"/>
        <end position="229"/>
    </location>
</feature>
<feature type="topological domain" description="Cytoplasmic" evidence="4">
    <location>
        <begin position="230"/>
        <end position="235"/>
    </location>
</feature>
<feature type="transmembrane region" description="Helical" evidence="4">
    <location>
        <begin position="236"/>
        <end position="253"/>
    </location>
</feature>
<feature type="topological domain" description="Extracellular" evidence="4">
    <location>
        <begin position="254"/>
        <end position="274"/>
    </location>
</feature>
<feature type="transmembrane region" description="Helical" evidence="4">
    <location>
        <begin position="275"/>
        <end position="295"/>
    </location>
</feature>
<feature type="topological domain" description="Cytoplasmic" evidence="4">
    <location>
        <begin position="296"/>
        <end position="778"/>
    </location>
</feature>
<feature type="transmembrane region" description="Helical" evidence="4">
    <location>
        <begin position="779"/>
        <end position="799"/>
    </location>
</feature>
<feature type="topological domain" description="Extracellular" evidence="4">
    <location>
        <begin position="800"/>
        <end position="810"/>
    </location>
</feature>
<feature type="transmembrane region" description="Helical" evidence="4">
    <location>
        <begin position="811"/>
        <end position="831"/>
    </location>
</feature>
<feature type="topological domain" description="Cytoplasmic" evidence="4">
    <location>
        <begin position="832"/>
        <end position="859"/>
    </location>
</feature>
<feature type="transmembrane region" description="Helical" evidence="4">
    <location>
        <begin position="860"/>
        <end position="880"/>
    </location>
</feature>
<feature type="topological domain" description="Extracellular" evidence="4">
    <location>
        <begin position="881"/>
        <end position="883"/>
    </location>
</feature>
<feature type="transmembrane region" description="Helical" evidence="4">
    <location>
        <begin position="884"/>
        <end position="904"/>
    </location>
</feature>
<feature type="topological domain" description="Cytoplasmic" evidence="4">
    <location>
        <begin position="905"/>
        <end position="911"/>
    </location>
</feature>
<feature type="transmembrane region" description="Helical" evidence="4">
    <location>
        <begin position="912"/>
        <end position="932"/>
    </location>
</feature>
<feature type="topological domain" description="Extracellular" evidence="4">
    <location>
        <begin position="933"/>
        <end position="966"/>
    </location>
</feature>
<feature type="transmembrane region" description="Helical" evidence="4">
    <location>
        <begin position="967"/>
        <end position="987"/>
    </location>
</feature>
<feature type="topological domain" description="Cytoplasmic" evidence="4">
    <location>
        <begin position="988"/>
        <end position="1305"/>
    </location>
</feature>
<feature type="region of interest" description="Disordered" evidence="6">
    <location>
        <begin position="46"/>
        <end position="71"/>
    </location>
</feature>
<feature type="region of interest" description="Disordered" evidence="6">
    <location>
        <begin position="343"/>
        <end position="369"/>
    </location>
</feature>
<feature type="region of interest" description="Disordered" evidence="6">
    <location>
        <begin position="607"/>
        <end position="680"/>
    </location>
</feature>
<feature type="region of interest" description="Disordered" evidence="6">
    <location>
        <begin position="1261"/>
        <end position="1305"/>
    </location>
</feature>
<feature type="compositionally biased region" description="Low complexity" evidence="6">
    <location>
        <begin position="46"/>
        <end position="55"/>
    </location>
</feature>
<feature type="compositionally biased region" description="Basic residues" evidence="6">
    <location>
        <begin position="353"/>
        <end position="368"/>
    </location>
</feature>
<feature type="compositionally biased region" description="Polar residues" evidence="6">
    <location>
        <begin position="607"/>
        <end position="618"/>
    </location>
</feature>
<feature type="compositionally biased region" description="Polar residues" evidence="6">
    <location>
        <begin position="670"/>
        <end position="680"/>
    </location>
</feature>
<feature type="compositionally biased region" description="Basic and acidic residues" evidence="6">
    <location>
        <begin position="1287"/>
        <end position="1305"/>
    </location>
</feature>
<feature type="binding site" evidence="3">
    <location>
        <begin position="393"/>
        <end position="398"/>
    </location>
    <ligand>
        <name>ATP</name>
        <dbReference type="ChEBI" id="CHEBI:30616"/>
    </ligand>
</feature>
<feature type="binding site" evidence="5">
    <location>
        <position position="393"/>
    </location>
    <ligand>
        <name>Mg(2+)</name>
        <dbReference type="ChEBI" id="CHEBI:18420"/>
        <label>1</label>
        <note>catalytic</note>
    </ligand>
</feature>
<feature type="binding site" evidence="5">
    <location>
        <position position="393"/>
    </location>
    <ligand>
        <name>Mg(2+)</name>
        <dbReference type="ChEBI" id="CHEBI:18420"/>
        <label>2</label>
        <note>catalytic</note>
    </ligand>
</feature>
<feature type="binding site" evidence="5">
    <location>
        <position position="394"/>
    </location>
    <ligand>
        <name>Mg(2+)</name>
        <dbReference type="ChEBI" id="CHEBI:18420"/>
        <label>2</label>
        <note>catalytic</note>
    </ligand>
</feature>
<feature type="binding site" evidence="3">
    <location>
        <begin position="435"/>
        <end position="437"/>
    </location>
    <ligand>
        <name>ATP</name>
        <dbReference type="ChEBI" id="CHEBI:30616"/>
    </ligand>
</feature>
<feature type="binding site" evidence="5">
    <location>
        <position position="437"/>
    </location>
    <ligand>
        <name>Mg(2+)</name>
        <dbReference type="ChEBI" id="CHEBI:18420"/>
        <label>1</label>
        <note>catalytic</note>
    </ligand>
</feature>
<feature type="binding site" evidence="5">
    <location>
        <position position="437"/>
    </location>
    <ligand>
        <name>Mg(2+)</name>
        <dbReference type="ChEBI" id="CHEBI:18420"/>
        <label>2</label>
        <note>catalytic</note>
    </ligand>
</feature>
<feature type="binding site" evidence="3">
    <location>
        <position position="481"/>
    </location>
    <ligand>
        <name>ATP</name>
        <dbReference type="ChEBI" id="CHEBI:30616"/>
    </ligand>
</feature>
<feature type="binding site" evidence="2">
    <location>
        <position position="1099"/>
    </location>
    <ligand>
        <name>ATP</name>
        <dbReference type="ChEBI" id="CHEBI:30616"/>
    </ligand>
</feature>
<feature type="binding site" evidence="2">
    <location>
        <begin position="1176"/>
        <end position="1178"/>
    </location>
    <ligand>
        <name>ATP</name>
        <dbReference type="ChEBI" id="CHEBI:30616"/>
    </ligand>
</feature>
<feature type="binding site" evidence="2">
    <location>
        <begin position="1183"/>
        <end position="1187"/>
    </location>
    <ligand>
        <name>ATP</name>
        <dbReference type="ChEBI" id="CHEBI:30616"/>
    </ligand>
</feature>
<feature type="binding site" evidence="2">
    <location>
        <position position="1223"/>
    </location>
    <ligand>
        <name>ATP</name>
        <dbReference type="ChEBI" id="CHEBI:30616"/>
    </ligand>
</feature>
<feature type="glycosylation site" description="N-linked (GlcNAc...) asparagine" evidence="4">
    <location>
        <position position="199"/>
    </location>
</feature>
<feature type="glycosylation site" description="N-linked (GlcNAc...) asparagine" evidence="4">
    <location>
        <position position="946"/>
    </location>
</feature>
<feature type="glycosylation site" description="N-linked (GlcNAc...) asparagine" evidence="4">
    <location>
        <position position="951"/>
    </location>
</feature>
<comment type="function">
    <text evidence="7">Adenylyl cyclase that catalyzes the formation of the signaling molecule cAMP in response to activation of G protein-coupled receptors.</text>
</comment>
<comment type="catalytic activity">
    <reaction evidence="7">
        <text>ATP = 3',5'-cyclic AMP + diphosphate</text>
        <dbReference type="Rhea" id="RHEA:15389"/>
        <dbReference type="ChEBI" id="CHEBI:30616"/>
        <dbReference type="ChEBI" id="CHEBI:33019"/>
        <dbReference type="ChEBI" id="CHEBI:58165"/>
        <dbReference type="EC" id="4.6.1.1"/>
    </reaction>
</comment>
<comment type="cofactor">
    <cofactor evidence="3">
        <name>Mg(2+)</name>
        <dbReference type="ChEBI" id="CHEBI:18420"/>
    </cofactor>
    <cofactor evidence="3">
        <name>Mn(2+)</name>
        <dbReference type="ChEBI" id="CHEBI:29035"/>
    </cofactor>
    <text evidence="3">Binds 2 magnesium ions per subunit. Is also active with manganese (in vitro).</text>
</comment>
<comment type="subcellular location">
    <subcellularLocation>
        <location evidence="1">Cell membrane</location>
        <topology evidence="1">Multi-pass membrane protein</topology>
    </subcellularLocation>
</comment>
<comment type="tissue specificity">
    <text evidence="7">Detected in oocytes.</text>
</comment>
<comment type="domain">
    <text evidence="2">The protein contains two modules with six transmembrane helices each; both are required for catalytic activity. Isolated N-terminal or C-terminal guanylate cyclase domains have no catalytic activity, but when they are brought together, enzyme activity is restored. The active site is at the interface of the two domains. Both contribute substrate-binding residues, but the catalytic metal ions are bound exclusively via the N-terminal guanylate cyclase domain.</text>
</comment>
<comment type="similarity">
    <text evidence="5">Belongs to the adenylyl cyclase class-4/guanylyl cyclase family.</text>
</comment>
<dbReference type="EC" id="4.6.1.1" evidence="7"/>
<dbReference type="EMBL" id="Z46958">
    <property type="protein sequence ID" value="CAA87082.1"/>
    <property type="molecule type" value="mRNA"/>
</dbReference>
<dbReference type="RefSeq" id="NP_001079302.1">
    <property type="nucleotide sequence ID" value="NM_001085833.1"/>
</dbReference>
<dbReference type="SMR" id="P98999"/>
<dbReference type="GlyCosmos" id="P98999">
    <property type="glycosylation" value="3 sites, No reported glycans"/>
</dbReference>
<dbReference type="GeneID" id="378610"/>
<dbReference type="KEGG" id="xla:378610"/>
<dbReference type="AGR" id="Xenbase:XB-GENE-999261"/>
<dbReference type="CTD" id="378610"/>
<dbReference type="Xenbase" id="XB-GENE-999261">
    <property type="gene designation" value="adcy9.L"/>
</dbReference>
<dbReference type="OrthoDB" id="60033at2759"/>
<dbReference type="Proteomes" id="UP000186698">
    <property type="component" value="Chromosome 9_10L"/>
</dbReference>
<dbReference type="Bgee" id="378610">
    <property type="expression patterns" value="Expressed in muscle tissue and 19 other cell types or tissues"/>
</dbReference>
<dbReference type="GO" id="GO:0016020">
    <property type="term" value="C:membrane"/>
    <property type="evidence" value="ECO:0000250"/>
    <property type="project" value="UniProtKB"/>
</dbReference>
<dbReference type="GO" id="GO:0005886">
    <property type="term" value="C:plasma membrane"/>
    <property type="evidence" value="ECO:0000250"/>
    <property type="project" value="UniProtKB"/>
</dbReference>
<dbReference type="GO" id="GO:0004016">
    <property type="term" value="F:adenylate cyclase activity"/>
    <property type="evidence" value="ECO:0000250"/>
    <property type="project" value="UniProtKB"/>
</dbReference>
<dbReference type="GO" id="GO:0005524">
    <property type="term" value="F:ATP binding"/>
    <property type="evidence" value="ECO:0007669"/>
    <property type="project" value="UniProtKB-KW"/>
</dbReference>
<dbReference type="GO" id="GO:0046872">
    <property type="term" value="F:metal ion binding"/>
    <property type="evidence" value="ECO:0007669"/>
    <property type="project" value="UniProtKB-KW"/>
</dbReference>
<dbReference type="GO" id="GO:0071880">
    <property type="term" value="P:adenylate cyclase-activating adrenergic receptor signaling pathway"/>
    <property type="evidence" value="ECO:0000250"/>
    <property type="project" value="UniProtKB"/>
</dbReference>
<dbReference type="GO" id="GO:0007189">
    <property type="term" value="P:adenylate cyclase-activating G protein-coupled receptor signaling pathway"/>
    <property type="evidence" value="ECO:0000250"/>
    <property type="project" value="UniProtKB"/>
</dbReference>
<dbReference type="GO" id="GO:0006171">
    <property type="term" value="P:cAMP biosynthetic process"/>
    <property type="evidence" value="ECO:0000250"/>
    <property type="project" value="UniProtKB"/>
</dbReference>
<dbReference type="GO" id="GO:0035556">
    <property type="term" value="P:intracellular signal transduction"/>
    <property type="evidence" value="ECO:0007669"/>
    <property type="project" value="InterPro"/>
</dbReference>
<dbReference type="CDD" id="cd07302">
    <property type="entry name" value="CHD"/>
    <property type="match status" value="2"/>
</dbReference>
<dbReference type="FunFam" id="3.30.70.1230:FF:000008">
    <property type="entry name" value="Adenylate cyclase type 9"/>
    <property type="match status" value="1"/>
</dbReference>
<dbReference type="FunFam" id="3.30.70.1230:FF:000014">
    <property type="entry name" value="adenylate cyclase type 9"/>
    <property type="match status" value="1"/>
</dbReference>
<dbReference type="Gene3D" id="3.30.70.1230">
    <property type="entry name" value="Nucleotide cyclase"/>
    <property type="match status" value="2"/>
</dbReference>
<dbReference type="InterPro" id="IPR001054">
    <property type="entry name" value="A/G_cyclase"/>
</dbReference>
<dbReference type="InterPro" id="IPR018297">
    <property type="entry name" value="A/G_cyclase_CS"/>
</dbReference>
<dbReference type="InterPro" id="IPR029787">
    <property type="entry name" value="Nucleotide_cyclase"/>
</dbReference>
<dbReference type="PANTHER" id="PTHR45627">
    <property type="entry name" value="ADENYLATE CYCLASE TYPE 1"/>
    <property type="match status" value="1"/>
</dbReference>
<dbReference type="PANTHER" id="PTHR45627:SF8">
    <property type="entry name" value="ADENYLATE CYCLASE TYPE 9"/>
    <property type="match status" value="1"/>
</dbReference>
<dbReference type="Pfam" id="PF00211">
    <property type="entry name" value="Guanylate_cyc"/>
    <property type="match status" value="2"/>
</dbReference>
<dbReference type="SMART" id="SM00044">
    <property type="entry name" value="CYCc"/>
    <property type="match status" value="2"/>
</dbReference>
<dbReference type="SUPFAM" id="SSF55073">
    <property type="entry name" value="Nucleotide cyclase"/>
    <property type="match status" value="2"/>
</dbReference>
<dbReference type="PROSITE" id="PS00452">
    <property type="entry name" value="GUANYLATE_CYCLASE_1"/>
    <property type="match status" value="2"/>
</dbReference>
<dbReference type="PROSITE" id="PS50125">
    <property type="entry name" value="GUANYLATE_CYCLASE_2"/>
    <property type="match status" value="2"/>
</dbReference>
<gene>
    <name type="primary">adcy9</name>
</gene>
<name>ADCY9_XENLA</name>
<proteinExistence type="evidence at protein level"/>